<reference key="1">
    <citation type="journal article" date="2013" name="Nature">
        <title>The zebrafish reference genome sequence and its relationship to the human genome.</title>
        <authorList>
            <person name="Howe K."/>
            <person name="Clark M.D."/>
            <person name="Torroja C.F."/>
            <person name="Torrance J."/>
            <person name="Berthelot C."/>
            <person name="Muffato M."/>
            <person name="Collins J.E."/>
            <person name="Humphray S."/>
            <person name="McLaren K."/>
            <person name="Matthews L."/>
            <person name="McLaren S."/>
            <person name="Sealy I."/>
            <person name="Caccamo M."/>
            <person name="Churcher C."/>
            <person name="Scott C."/>
            <person name="Barrett J.C."/>
            <person name="Koch R."/>
            <person name="Rauch G.J."/>
            <person name="White S."/>
            <person name="Chow W."/>
            <person name="Kilian B."/>
            <person name="Quintais L.T."/>
            <person name="Guerra-Assuncao J.A."/>
            <person name="Zhou Y."/>
            <person name="Gu Y."/>
            <person name="Yen J."/>
            <person name="Vogel J.H."/>
            <person name="Eyre T."/>
            <person name="Redmond S."/>
            <person name="Banerjee R."/>
            <person name="Chi J."/>
            <person name="Fu B."/>
            <person name="Langley E."/>
            <person name="Maguire S.F."/>
            <person name="Laird G.K."/>
            <person name="Lloyd D."/>
            <person name="Kenyon E."/>
            <person name="Donaldson S."/>
            <person name="Sehra H."/>
            <person name="Almeida-King J."/>
            <person name="Loveland J."/>
            <person name="Trevanion S."/>
            <person name="Jones M."/>
            <person name="Quail M."/>
            <person name="Willey D."/>
            <person name="Hunt A."/>
            <person name="Burton J."/>
            <person name="Sims S."/>
            <person name="McLay K."/>
            <person name="Plumb B."/>
            <person name="Davis J."/>
            <person name="Clee C."/>
            <person name="Oliver K."/>
            <person name="Clark R."/>
            <person name="Riddle C."/>
            <person name="Elliot D."/>
            <person name="Threadgold G."/>
            <person name="Harden G."/>
            <person name="Ware D."/>
            <person name="Begum S."/>
            <person name="Mortimore B."/>
            <person name="Kerry G."/>
            <person name="Heath P."/>
            <person name="Phillimore B."/>
            <person name="Tracey A."/>
            <person name="Corby N."/>
            <person name="Dunn M."/>
            <person name="Johnson C."/>
            <person name="Wood J."/>
            <person name="Clark S."/>
            <person name="Pelan S."/>
            <person name="Griffiths G."/>
            <person name="Smith M."/>
            <person name="Glithero R."/>
            <person name="Howden P."/>
            <person name="Barker N."/>
            <person name="Lloyd C."/>
            <person name="Stevens C."/>
            <person name="Harley J."/>
            <person name="Holt K."/>
            <person name="Panagiotidis G."/>
            <person name="Lovell J."/>
            <person name="Beasley H."/>
            <person name="Henderson C."/>
            <person name="Gordon D."/>
            <person name="Auger K."/>
            <person name="Wright D."/>
            <person name="Collins J."/>
            <person name="Raisen C."/>
            <person name="Dyer L."/>
            <person name="Leung K."/>
            <person name="Robertson L."/>
            <person name="Ambridge K."/>
            <person name="Leongamornlert D."/>
            <person name="McGuire S."/>
            <person name="Gilderthorp R."/>
            <person name="Griffiths C."/>
            <person name="Manthravadi D."/>
            <person name="Nichol S."/>
            <person name="Barker G."/>
            <person name="Whitehead S."/>
            <person name="Kay M."/>
            <person name="Brown J."/>
            <person name="Murnane C."/>
            <person name="Gray E."/>
            <person name="Humphries M."/>
            <person name="Sycamore N."/>
            <person name="Barker D."/>
            <person name="Saunders D."/>
            <person name="Wallis J."/>
            <person name="Babbage A."/>
            <person name="Hammond S."/>
            <person name="Mashreghi-Mohammadi M."/>
            <person name="Barr L."/>
            <person name="Martin S."/>
            <person name="Wray P."/>
            <person name="Ellington A."/>
            <person name="Matthews N."/>
            <person name="Ellwood M."/>
            <person name="Woodmansey R."/>
            <person name="Clark G."/>
            <person name="Cooper J."/>
            <person name="Tromans A."/>
            <person name="Grafham D."/>
            <person name="Skuce C."/>
            <person name="Pandian R."/>
            <person name="Andrews R."/>
            <person name="Harrison E."/>
            <person name="Kimberley A."/>
            <person name="Garnett J."/>
            <person name="Fosker N."/>
            <person name="Hall R."/>
            <person name="Garner P."/>
            <person name="Kelly D."/>
            <person name="Bird C."/>
            <person name="Palmer S."/>
            <person name="Gehring I."/>
            <person name="Berger A."/>
            <person name="Dooley C.M."/>
            <person name="Ersan-Urun Z."/>
            <person name="Eser C."/>
            <person name="Geiger H."/>
            <person name="Geisler M."/>
            <person name="Karotki L."/>
            <person name="Kirn A."/>
            <person name="Konantz J."/>
            <person name="Konantz M."/>
            <person name="Oberlander M."/>
            <person name="Rudolph-Geiger S."/>
            <person name="Teucke M."/>
            <person name="Lanz C."/>
            <person name="Raddatz G."/>
            <person name="Osoegawa K."/>
            <person name="Zhu B."/>
            <person name="Rapp A."/>
            <person name="Widaa S."/>
            <person name="Langford C."/>
            <person name="Yang F."/>
            <person name="Schuster S.C."/>
            <person name="Carter N.P."/>
            <person name="Harrow J."/>
            <person name="Ning Z."/>
            <person name="Herrero J."/>
            <person name="Searle S.M."/>
            <person name="Enright A."/>
            <person name="Geisler R."/>
            <person name="Plasterk R.H."/>
            <person name="Lee C."/>
            <person name="Westerfield M."/>
            <person name="de Jong P.J."/>
            <person name="Zon L.I."/>
            <person name="Postlethwait J.H."/>
            <person name="Nusslein-Volhard C."/>
            <person name="Hubbard T.J."/>
            <person name="Roest Crollius H."/>
            <person name="Rogers J."/>
            <person name="Stemple D.L."/>
        </authorList>
    </citation>
    <scope>NUCLEOTIDE SEQUENCE [LARGE SCALE GENOMIC DNA]</scope>
    <source>
        <strain>Tuebingen</strain>
    </source>
</reference>
<reference key="2">
    <citation type="journal article" date="2012" name="ACS Chem. Biol.">
        <title>A simple, highly visual in vivo screen for anaplastic lymphoma kinase inhibitors.</title>
        <authorList>
            <person name="Rodrigues F.S."/>
            <person name="Yang X."/>
            <person name="Nikaido M."/>
            <person name="Liu Q."/>
            <person name="Kelsh R.N."/>
        </authorList>
    </citation>
    <scope>ACTIVITY REGULATION</scope>
</reference>
<reference key="3">
    <citation type="journal article" date="2013" name="PLoS ONE">
        <title>Anaplastic lymphoma kinase is required for neurogenesis in the developing central nervous system of zebrafish.</title>
        <authorList>
            <person name="Yao S."/>
            <person name="Cheng M."/>
            <person name="Zhang Q."/>
            <person name="Wasik M."/>
            <person name="Kelsh R."/>
            <person name="Winkler C."/>
        </authorList>
    </citation>
    <scope>FUNCTION</scope>
    <scope>TISSUE SPECIFICITY</scope>
    <scope>DEVELOPMENTAL STAGE</scope>
    <scope>DISRUPTION PHENOTYPE</scope>
</reference>
<reference key="4">
    <citation type="journal article" date="2017" name="Proc. Natl. Acad. Sci. U.S.A.">
        <title>Alk and Ltk ligands are essential for iridophore development in zebrafish mediated by the receptor tyrosine kinase Ltk.</title>
        <authorList>
            <person name="Mo E.S."/>
            <person name="Cheng Q."/>
            <person name="Reshetnyak A.V."/>
            <person name="Schlessinger J."/>
            <person name="Nicoli S."/>
        </authorList>
    </citation>
    <scope>FUNCTION</scope>
    <scope>DISRUPTION PHENOTYPE</scope>
</reference>
<organism>
    <name type="scientific">Danio rerio</name>
    <name type="common">Zebrafish</name>
    <name type="synonym">Brachydanio rerio</name>
    <dbReference type="NCBI Taxonomy" id="7955"/>
    <lineage>
        <taxon>Eukaryota</taxon>
        <taxon>Metazoa</taxon>
        <taxon>Chordata</taxon>
        <taxon>Craniata</taxon>
        <taxon>Vertebrata</taxon>
        <taxon>Euteleostomi</taxon>
        <taxon>Actinopterygii</taxon>
        <taxon>Neopterygii</taxon>
        <taxon>Teleostei</taxon>
        <taxon>Ostariophysi</taxon>
        <taxon>Cypriniformes</taxon>
        <taxon>Danionidae</taxon>
        <taxon>Danioninae</taxon>
        <taxon>Danio</taxon>
    </lineage>
</organism>
<gene>
    <name evidence="11" type="primary">alk</name>
</gene>
<protein>
    <recommendedName>
        <fullName evidence="13">ALK tyrosine kinase receptor</fullName>
        <ecNumber evidence="2">2.7.10.1</ecNumber>
    </recommendedName>
    <alternativeName>
        <fullName evidence="12">Anaplastic lymphoma kinase 2</fullName>
        <shortName evidence="12">alk-2</shortName>
    </alternativeName>
    <alternativeName>
        <fullName evidence="11">Anaplastic lymphoma kinase homolog</fullName>
    </alternativeName>
</protein>
<name>ALK_DANRE</name>
<evidence type="ECO:0000250" key="1">
    <source>
        <dbReference type="UniProtKB" id="P29376"/>
    </source>
</evidence>
<evidence type="ECO:0000250" key="2">
    <source>
        <dbReference type="UniProtKB" id="Q9UM73"/>
    </source>
</evidence>
<evidence type="ECO:0000255" key="3"/>
<evidence type="ECO:0000255" key="4">
    <source>
        <dbReference type="PROSITE-ProRule" id="PRU00128"/>
    </source>
</evidence>
<evidence type="ECO:0000255" key="5">
    <source>
        <dbReference type="PROSITE-ProRule" id="PRU00159"/>
    </source>
</evidence>
<evidence type="ECO:0000255" key="6">
    <source>
        <dbReference type="PROSITE-ProRule" id="PRU00498"/>
    </source>
</evidence>
<evidence type="ECO:0000256" key="7">
    <source>
        <dbReference type="SAM" id="MobiDB-lite"/>
    </source>
</evidence>
<evidence type="ECO:0000269" key="8">
    <source>
    </source>
</evidence>
<evidence type="ECO:0000269" key="9">
    <source>
    </source>
</evidence>
<evidence type="ECO:0000269" key="10">
    <source>
    </source>
</evidence>
<evidence type="ECO:0000303" key="11">
    <source>
    </source>
</evidence>
<evidence type="ECO:0000303" key="12">
    <source>
    </source>
</evidence>
<evidence type="ECO:0000305" key="13"/>
<keyword id="KW-0067">ATP-binding</keyword>
<keyword id="KW-1003">Cell membrane</keyword>
<keyword id="KW-1015">Disulfide bond</keyword>
<keyword id="KW-0325">Glycoprotein</keyword>
<keyword id="KW-0418">Kinase</keyword>
<keyword id="KW-0472">Membrane</keyword>
<keyword id="KW-0547">Nucleotide-binding</keyword>
<keyword id="KW-0675">Receptor</keyword>
<keyword id="KW-1185">Reference proteome</keyword>
<keyword id="KW-0732">Signal</keyword>
<keyword id="KW-0808">Transferase</keyword>
<keyword id="KW-0812">Transmembrane</keyword>
<keyword id="KW-1133">Transmembrane helix</keyword>
<keyword id="KW-0829">Tyrosine-protein kinase</keyword>
<dbReference type="EC" id="2.7.10.1" evidence="2"/>
<dbReference type="EMBL" id="BX663528">
    <property type="status" value="NOT_ANNOTATED_CDS"/>
    <property type="molecule type" value="Genomic_DNA"/>
</dbReference>
<dbReference type="RefSeq" id="NP_001410894.1">
    <property type="nucleotide sequence ID" value="NM_001423965.1"/>
</dbReference>
<dbReference type="SMR" id="F8W3R9"/>
<dbReference type="STRING" id="7955.ENSDARP00000124055"/>
<dbReference type="GlyCosmos" id="F8W3R9">
    <property type="glycosylation" value="17 sites, No reported glycans"/>
</dbReference>
<dbReference type="PaxDb" id="7955-ENSDARP00000124055"/>
<dbReference type="GeneID" id="563509"/>
<dbReference type="eggNOG" id="KOG1095">
    <property type="taxonomic scope" value="Eukaryota"/>
</dbReference>
<dbReference type="OrthoDB" id="65481at2759"/>
<dbReference type="PhylomeDB" id="F8W3R9"/>
<dbReference type="TreeFam" id="TF351636"/>
<dbReference type="Reactome" id="R-DRE-201556">
    <property type="pathway name" value="Signaling by ALK"/>
</dbReference>
<dbReference type="Reactome" id="R-DRE-9851151">
    <property type="pathway name" value="MDK and PTN in ALK signaling"/>
</dbReference>
<dbReference type="Proteomes" id="UP000000437">
    <property type="component" value="Chromosome 17"/>
</dbReference>
<dbReference type="Bgee" id="ENSDARG00000095833">
    <property type="expression patterns" value="Expressed in brain and 9 other cell types or tissues"/>
</dbReference>
<dbReference type="ExpressionAtlas" id="F8W3R9">
    <property type="expression patterns" value="baseline"/>
</dbReference>
<dbReference type="GO" id="GO:0005886">
    <property type="term" value="C:plasma membrane"/>
    <property type="evidence" value="ECO:0007669"/>
    <property type="project" value="UniProtKB-SubCell"/>
</dbReference>
<dbReference type="GO" id="GO:0005524">
    <property type="term" value="F:ATP binding"/>
    <property type="evidence" value="ECO:0007669"/>
    <property type="project" value="UniProtKB-KW"/>
</dbReference>
<dbReference type="GO" id="GO:0004714">
    <property type="term" value="F:transmembrane receptor protein tyrosine kinase activity"/>
    <property type="evidence" value="ECO:0007669"/>
    <property type="project" value="UniProtKB-EC"/>
</dbReference>
<dbReference type="GO" id="GO:0007169">
    <property type="term" value="P:cell surface receptor protein tyrosine kinase signaling pathway"/>
    <property type="evidence" value="ECO:0007669"/>
    <property type="project" value="InterPro"/>
</dbReference>
<dbReference type="GO" id="GO:0043410">
    <property type="term" value="P:positive regulation of MAPK cascade"/>
    <property type="evidence" value="ECO:0000315"/>
    <property type="project" value="UniProtKB"/>
</dbReference>
<dbReference type="GO" id="GO:0050769">
    <property type="term" value="P:positive regulation of neurogenesis"/>
    <property type="evidence" value="ECO:0000315"/>
    <property type="project" value="UniProtKB"/>
</dbReference>
<dbReference type="CDD" id="cd00112">
    <property type="entry name" value="LDLa"/>
    <property type="match status" value="1"/>
</dbReference>
<dbReference type="CDD" id="cd06263">
    <property type="entry name" value="MAM"/>
    <property type="match status" value="1"/>
</dbReference>
<dbReference type="CDD" id="cd05036">
    <property type="entry name" value="PTKc_ALK_LTK"/>
    <property type="match status" value="1"/>
</dbReference>
<dbReference type="FunFam" id="1.10.510.10:FF:000113">
    <property type="entry name" value="Tyrosine-protein kinase receptor"/>
    <property type="match status" value="1"/>
</dbReference>
<dbReference type="FunFam" id="3.30.200.20:FF:000117">
    <property type="entry name" value="Tyrosine-protein kinase receptor"/>
    <property type="match status" value="1"/>
</dbReference>
<dbReference type="Gene3D" id="2.60.120.200">
    <property type="match status" value="1"/>
</dbReference>
<dbReference type="Gene3D" id="3.30.200.20">
    <property type="entry name" value="Phosphorylase Kinase, domain 1"/>
    <property type="match status" value="1"/>
</dbReference>
<dbReference type="Gene3D" id="1.10.510.10">
    <property type="entry name" value="Transferase(Phosphotransferase) domain 1"/>
    <property type="match status" value="1"/>
</dbReference>
<dbReference type="InterPro" id="IPR013320">
    <property type="entry name" value="ConA-like_dom_sf"/>
</dbReference>
<dbReference type="InterPro" id="IPR011009">
    <property type="entry name" value="Kinase-like_dom_sf"/>
</dbReference>
<dbReference type="InterPro" id="IPR002172">
    <property type="entry name" value="LDrepeatLR_classA_rpt"/>
</dbReference>
<dbReference type="InterPro" id="IPR000998">
    <property type="entry name" value="MAM_dom"/>
</dbReference>
<dbReference type="InterPro" id="IPR000719">
    <property type="entry name" value="Prot_kinase_dom"/>
</dbReference>
<dbReference type="InterPro" id="IPR017441">
    <property type="entry name" value="Protein_kinase_ATP_BS"/>
</dbReference>
<dbReference type="InterPro" id="IPR050122">
    <property type="entry name" value="RTK"/>
</dbReference>
<dbReference type="InterPro" id="IPR001245">
    <property type="entry name" value="Ser-Thr/Tyr_kinase_cat_dom"/>
</dbReference>
<dbReference type="InterPro" id="IPR008266">
    <property type="entry name" value="Tyr_kinase_AS"/>
</dbReference>
<dbReference type="InterPro" id="IPR020635">
    <property type="entry name" value="Tyr_kinase_cat_dom"/>
</dbReference>
<dbReference type="InterPro" id="IPR002011">
    <property type="entry name" value="Tyr_kinase_rcpt_2_CS"/>
</dbReference>
<dbReference type="PANTHER" id="PTHR24416:SF615">
    <property type="entry name" value="ALK TYROSINE KINASE RECEPTOR"/>
    <property type="match status" value="1"/>
</dbReference>
<dbReference type="PANTHER" id="PTHR24416">
    <property type="entry name" value="TYROSINE-PROTEIN KINASE RECEPTOR"/>
    <property type="match status" value="1"/>
</dbReference>
<dbReference type="Pfam" id="PF00629">
    <property type="entry name" value="MAM"/>
    <property type="match status" value="1"/>
</dbReference>
<dbReference type="Pfam" id="PF07714">
    <property type="entry name" value="PK_Tyr_Ser-Thr"/>
    <property type="match status" value="1"/>
</dbReference>
<dbReference type="PRINTS" id="PR00109">
    <property type="entry name" value="TYRKINASE"/>
</dbReference>
<dbReference type="SMART" id="SM00192">
    <property type="entry name" value="LDLa"/>
    <property type="match status" value="1"/>
</dbReference>
<dbReference type="SMART" id="SM00219">
    <property type="entry name" value="TyrKc"/>
    <property type="match status" value="1"/>
</dbReference>
<dbReference type="SUPFAM" id="SSF49899">
    <property type="entry name" value="Concanavalin A-like lectins/glucanases"/>
    <property type="match status" value="1"/>
</dbReference>
<dbReference type="SUPFAM" id="SSF56112">
    <property type="entry name" value="Protein kinase-like (PK-like)"/>
    <property type="match status" value="1"/>
</dbReference>
<dbReference type="PROSITE" id="PS50060">
    <property type="entry name" value="MAM_2"/>
    <property type="match status" value="1"/>
</dbReference>
<dbReference type="PROSITE" id="PS00107">
    <property type="entry name" value="PROTEIN_KINASE_ATP"/>
    <property type="match status" value="1"/>
</dbReference>
<dbReference type="PROSITE" id="PS50011">
    <property type="entry name" value="PROTEIN_KINASE_DOM"/>
    <property type="match status" value="1"/>
</dbReference>
<dbReference type="PROSITE" id="PS00109">
    <property type="entry name" value="PROTEIN_KINASE_TYR"/>
    <property type="match status" value="1"/>
</dbReference>
<dbReference type="PROSITE" id="PS00239">
    <property type="entry name" value="RECEPTOR_TYR_KIN_II"/>
    <property type="match status" value="1"/>
</dbReference>
<sequence>MIARILYFFLWSAAFLPELQCASQRTADALTTFPTSAFINGTDRKDSNQTSTSRIKRKTLSVDFAVPSLLRYYLALFIKRPLNGDCLSFNGCYTVRANLLMRCVPLQKTIAGLLDAKLAAMNVNRSSTGQLPYRQKRPVPKVLNLGLTSASRKSNQVVVEVGEEMVKTGCGGLHVYEDAPVVFLEMDLTRILEWWLGAEGGRLRVRLMPERKVQVPGKEDKYSAAIRASDARLFIQIASSERPSSTISRNPTVAPKYWNFSWIAEDELTFPEDPVSTSDCTSKAKSCDRRPDGYYPEFAWSLTSAEDSWAIDQTMVKTKASSQGWEEGRFLTVNSSALTGPWVLSPWFRAAHRPCGLDITVFLHPRQSGRYTVWLIERDKPPLALLTTEHPHVIGWAVVHLSLAARSKPFRISSSYSQPGEIETATYDPRYSTNCTTRSSQNVTLRGRYHCRGGREINVSQLCDFSIDCPQGDDEGEHCRQFLNGSYCSFGREDCGWQPVQGRGPQWRAHPSIPQSLRSSCPSPGALLAIDSQPKGQRGSAQVRSPLFFYPLRNAPCMVKFWVCGSSNGALSLWITENSTGPEGQRSLWNSTSEANMGKGWKLITLPLFGLVDLFYLQFSADISSSSGIAFAVDNFTLSMECFLETNGEFPPVAPISPTQALFTQSNENIKTTTTLYGGPGASTESVKWIFHTCGATGQDGPTPTQCSNSYRNTNVNVTVGTKGPFKGIQMWQVPETRKYRITAYGAAGGRSVLAVHKSHGVYMTGDFLLQKDELLYILVGQEGEDACPNMVPTMDRICREQQGPSINKTQLKGGGGGGGGGTYVFKVVNGVHIPLLIAAGGGGRGYSSQSETPEEVMDRDPSIPGRNGKSGTAGGGGGWNDSAPVPQGGRPLILGGQGGEPCQAMGWKTRGGFGGGGGACTAGGGGGGYRGGSAWHDNDPRKDGDDGTSYISPDGEMYLEPLKGMEGNGEVIINPVQNCSHCESGDCHETSEGMVCYCDEELTLAPDGVSCINSTELPLLPAQPSLSHLALGLSVGTSALIAALLLAVSGVMIMYRRKHTELQSIQLELQSPDCKLSKLRASTIMTDYNPNYCFGGKTASVNDLKEVPRRNISLTRGLGHGAFGEVYEGLAVGIPGEPSPMQVAVKTLPEVCSEQDELDFLMEALIISKFSHQNIVRCIGVSLQALPHFILLELMAGGDLKSFLRETRPRLEHPSSLTMVDLLNIARDIARGCQYLEENQFIHRDIAARNCLLTCKGPGRVAKIGDFGMARDIYRASYYRKGGRAMLPVKWMPPEAFMEGIFTSKTDTWSFGVLLWEIFSLGYMPYPSRSNQEVLEFVTNGGRMDPPKNCPGPVYRIMTQSWQHQPEDRPNFSTILERIDYCLQDPDVVNVPLPVEYGPIPEEEERVPMRPEDPSAPSLLVSPQGTEDVPSATHSAQSKKDGEAIHMANLSTDSKLPPVPPSQPHPHHHLQTPVVTAPVPASKPSSTTSNAQDGGHVNLGFMQAHSSEKESRNRKPTNLWNPTYGSWFLQQQQKRQQVQAQRQTSGPRIPGEGQEQVGRTVTVAEALGLQQQHKQQQYQQQLQRQQQQQQQQQQQQGLCRPLLPPPPPPAPTPLLLDSATLAPVPLYRLRRFPCGNIGYGYQEQGLPMEPMQGPQLPPPHPGQQRPISLTRASGPEDSRPLLVTMGTVQDSRLPKMEGHNATVL</sequence>
<accession>F8W3R9</accession>
<feature type="signal peptide" evidence="3">
    <location>
        <begin position="1"/>
        <end position="21"/>
    </location>
</feature>
<feature type="chain" id="PRO_0000455467" description="ALK tyrosine kinase receptor" evidence="3">
    <location>
        <begin position="22"/>
        <end position="1705"/>
    </location>
</feature>
<feature type="topological domain" description="Extracellular" evidence="13">
    <location>
        <begin position="22"/>
        <end position="1035"/>
    </location>
</feature>
<feature type="transmembrane region" description="Helical" evidence="3">
    <location>
        <begin position="1036"/>
        <end position="1056"/>
    </location>
</feature>
<feature type="topological domain" description="Cytoplasmic" evidence="13">
    <location>
        <begin position="1057"/>
        <end position="1705"/>
    </location>
</feature>
<feature type="domain" description="MAM" evidence="4">
    <location>
        <begin position="486"/>
        <end position="644"/>
    </location>
</feature>
<feature type="domain" description="Protein kinase" evidence="5">
    <location>
        <begin position="1113"/>
        <end position="1389"/>
    </location>
</feature>
<feature type="region of interest" description="Heparin-binding region" evidence="2">
    <location>
        <begin position="54"/>
        <end position="76"/>
    </location>
</feature>
<feature type="region of interest" description="Disordered" evidence="7">
    <location>
        <begin position="842"/>
        <end position="892"/>
    </location>
</feature>
<feature type="region of interest" description="EGF-like" evidence="2">
    <location>
        <begin position="980"/>
        <end position="1016"/>
    </location>
</feature>
<feature type="region of interest" description="Disordered" evidence="7">
    <location>
        <begin position="1395"/>
        <end position="1499"/>
    </location>
</feature>
<feature type="region of interest" description="Disordered" evidence="7">
    <location>
        <begin position="1505"/>
        <end position="1524"/>
    </location>
</feature>
<feature type="region of interest" description="Disordered" evidence="7">
    <location>
        <begin position="1532"/>
        <end position="1557"/>
    </location>
</feature>
<feature type="region of interest" description="Disordered" evidence="7">
    <location>
        <begin position="1588"/>
        <end position="1613"/>
    </location>
</feature>
<feature type="region of interest" description="Disordered" evidence="7">
    <location>
        <begin position="1646"/>
        <end position="1681"/>
    </location>
</feature>
<feature type="compositionally biased region" description="Polar residues" evidence="7">
    <location>
        <begin position="1484"/>
        <end position="1493"/>
    </location>
</feature>
<feature type="compositionally biased region" description="Low complexity" evidence="7">
    <location>
        <begin position="1532"/>
        <end position="1544"/>
    </location>
</feature>
<feature type="compositionally biased region" description="Low complexity" evidence="7">
    <location>
        <begin position="1588"/>
        <end position="1602"/>
    </location>
</feature>
<feature type="compositionally biased region" description="Pro residues" evidence="7">
    <location>
        <begin position="1603"/>
        <end position="1613"/>
    </location>
</feature>
<feature type="active site" description="Proton acceptor" evidence="5">
    <location>
        <position position="1246"/>
    </location>
</feature>
<feature type="binding site" evidence="5">
    <location>
        <begin position="1119"/>
        <end position="1127"/>
    </location>
    <ligand>
        <name>ATP</name>
        <dbReference type="ChEBI" id="CHEBI:30616"/>
    </ligand>
</feature>
<feature type="binding site" evidence="5">
    <location>
        <position position="1147"/>
    </location>
    <ligand>
        <name>ATP</name>
        <dbReference type="ChEBI" id="CHEBI:30616"/>
    </ligand>
</feature>
<feature type="glycosylation site" description="N-linked (GlcNAc...) asparagine" evidence="6">
    <location>
        <position position="40"/>
    </location>
</feature>
<feature type="glycosylation site" description="N-linked (GlcNAc...) asparagine" evidence="6">
    <location>
        <position position="48"/>
    </location>
</feature>
<feature type="glycosylation site" description="N-linked (GlcNAc...) asparagine" evidence="6">
    <location>
        <position position="124"/>
    </location>
</feature>
<feature type="glycosylation site" description="N-linked (GlcNAc...) asparagine" evidence="6">
    <location>
        <position position="259"/>
    </location>
</feature>
<feature type="glycosylation site" description="N-linked (GlcNAc...) asparagine" evidence="6">
    <location>
        <position position="334"/>
    </location>
</feature>
<feature type="glycosylation site" description="N-linked (GlcNAc...) asparagine" evidence="6">
    <location>
        <position position="434"/>
    </location>
</feature>
<feature type="glycosylation site" description="N-linked (GlcNAc...) asparagine" evidence="6">
    <location>
        <position position="442"/>
    </location>
</feature>
<feature type="glycosylation site" description="N-linked (GlcNAc...) asparagine" evidence="6">
    <location>
        <position position="458"/>
    </location>
</feature>
<feature type="glycosylation site" description="N-linked (GlcNAc...) asparagine" evidence="6">
    <location>
        <position position="484"/>
    </location>
</feature>
<feature type="glycosylation site" description="N-linked (GlcNAc...) asparagine" evidence="6">
    <location>
        <position position="578"/>
    </location>
</feature>
<feature type="glycosylation site" description="N-linked (GlcNAc...) asparagine" evidence="6">
    <location>
        <position position="590"/>
    </location>
</feature>
<feature type="glycosylation site" description="N-linked (GlcNAc...) asparagine" evidence="6">
    <location>
        <position position="635"/>
    </location>
</feature>
<feature type="glycosylation site" description="N-linked (GlcNAc...) asparagine" evidence="6">
    <location>
        <position position="717"/>
    </location>
</feature>
<feature type="glycosylation site" description="N-linked (GlcNAc...) asparagine" evidence="6">
    <location>
        <position position="808"/>
    </location>
</feature>
<feature type="glycosylation site" description="N-linked (GlcNAc...) asparagine" evidence="6">
    <location>
        <position position="881"/>
    </location>
</feature>
<feature type="glycosylation site" description="N-linked (GlcNAc...) asparagine" evidence="6">
    <location>
        <position position="979"/>
    </location>
</feature>
<feature type="glycosylation site" description="N-linked (GlcNAc...) asparagine" evidence="6">
    <location>
        <position position="1014"/>
    </location>
</feature>
<feature type="disulfide bond" evidence="2">
    <location>
        <begin position="694"/>
        <end position="707"/>
    </location>
</feature>
<feature type="disulfide bond" evidence="2">
    <location>
        <begin position="788"/>
        <end position="799"/>
    </location>
</feature>
<feature type="disulfide bond" evidence="2">
    <location>
        <begin position="903"/>
        <end position="921"/>
    </location>
</feature>
<feature type="disulfide bond" evidence="2">
    <location>
        <begin position="980"/>
        <end position="988"/>
    </location>
</feature>
<feature type="disulfide bond" evidence="2">
    <location>
        <begin position="983"/>
        <end position="997"/>
    </location>
</feature>
<comment type="function">
    <text evidence="2 9 10">Receptor tyrosine kinase required for neurogenesis in the developing central nervous system (PubMed:23667670). Following activation by alkal ligands (alkal1, alkal2a or alkal2b) at the cell surface, transduces an extracellular signal into an intracellular response (PubMed:29078341). Ligand-binding to the extracellular domain induces tyrosine kinase activation, resulting in the activation of the mitogen-activated protein kinase (MAPK) pathway (PubMed:23667670). Phosphorylates almost exclusively at the first tyrosine of the Y-x-x-x-Y-Y motif (By similarity).</text>
</comment>
<comment type="catalytic activity">
    <reaction evidence="2">
        <text>L-tyrosyl-[protein] + ATP = O-phospho-L-tyrosyl-[protein] + ADP + H(+)</text>
        <dbReference type="Rhea" id="RHEA:10596"/>
        <dbReference type="Rhea" id="RHEA-COMP:10136"/>
        <dbReference type="Rhea" id="RHEA-COMP:20101"/>
        <dbReference type="ChEBI" id="CHEBI:15378"/>
        <dbReference type="ChEBI" id="CHEBI:30616"/>
        <dbReference type="ChEBI" id="CHEBI:46858"/>
        <dbReference type="ChEBI" id="CHEBI:61978"/>
        <dbReference type="ChEBI" id="CHEBI:456216"/>
        <dbReference type="EC" id="2.7.10.1"/>
    </reaction>
</comment>
<comment type="activity regulation">
    <text evidence="8">Inhibited by ALK inhibitor TAE684.</text>
</comment>
<comment type="subunit">
    <text evidence="1">Homodimer; homodimerizes upon binding to alkal ligands (alkal1, alkal2a or alkal2b).</text>
</comment>
<comment type="subcellular location">
    <subcellularLocation>
        <location evidence="2">Cell membrane</location>
        <topology evidence="3">Single-pass type I membrane protein</topology>
    </subcellularLocation>
</comment>
<comment type="tissue specificity">
    <text evidence="9">Highly expressed in the developing central nervous system: highly expressed in brain, with much lower expression in heart, caudal fin and testis.</text>
</comment>
<comment type="developmental stage">
    <text evidence="9">First detected at 12 hours post-fertilization (hpf), during the initiation of segmentation and neurulation (PubMed:23667670). Expression increases with the most profound increase at 48 hpf (PubMed:23667670).</text>
</comment>
<comment type="disruption phenotype">
    <text evidence="9 10">Morpholino knockdown of the protein causes impaired neuronal differentiation and reduced neuron numbers in the hindbrain (PubMed:23667670). Fishes display normal iridophore development (PubMed:29078341).</text>
</comment>
<comment type="similarity">
    <text evidence="5">Belongs to the protein kinase superfamily. Tyr protein kinase family. Insulin receptor subfamily.</text>
</comment>
<proteinExistence type="evidence at transcript level"/>